<accession>Q10448</accession>
<keyword id="KW-1185">Reference proteome</keyword>
<protein>
    <recommendedName>
        <fullName>Uncharacterized protein C12B10.15c</fullName>
    </recommendedName>
</protein>
<reference key="1">
    <citation type="journal article" date="2002" name="Nature">
        <title>The genome sequence of Schizosaccharomyces pombe.</title>
        <authorList>
            <person name="Wood V."/>
            <person name="Gwilliam R."/>
            <person name="Rajandream M.A."/>
            <person name="Lyne M.H."/>
            <person name="Lyne R."/>
            <person name="Stewart A."/>
            <person name="Sgouros J.G."/>
            <person name="Peat N."/>
            <person name="Hayles J."/>
            <person name="Baker S.G."/>
            <person name="Basham D."/>
            <person name="Bowman S."/>
            <person name="Brooks K."/>
            <person name="Brown D."/>
            <person name="Brown S."/>
            <person name="Chillingworth T."/>
            <person name="Churcher C.M."/>
            <person name="Collins M."/>
            <person name="Connor R."/>
            <person name="Cronin A."/>
            <person name="Davis P."/>
            <person name="Feltwell T."/>
            <person name="Fraser A."/>
            <person name="Gentles S."/>
            <person name="Goble A."/>
            <person name="Hamlin N."/>
            <person name="Harris D.E."/>
            <person name="Hidalgo J."/>
            <person name="Hodgson G."/>
            <person name="Holroyd S."/>
            <person name="Hornsby T."/>
            <person name="Howarth S."/>
            <person name="Huckle E.J."/>
            <person name="Hunt S."/>
            <person name="Jagels K."/>
            <person name="James K.D."/>
            <person name="Jones L."/>
            <person name="Jones M."/>
            <person name="Leather S."/>
            <person name="McDonald S."/>
            <person name="McLean J."/>
            <person name="Mooney P."/>
            <person name="Moule S."/>
            <person name="Mungall K.L."/>
            <person name="Murphy L.D."/>
            <person name="Niblett D."/>
            <person name="Odell C."/>
            <person name="Oliver K."/>
            <person name="O'Neil S."/>
            <person name="Pearson D."/>
            <person name="Quail M.A."/>
            <person name="Rabbinowitsch E."/>
            <person name="Rutherford K.M."/>
            <person name="Rutter S."/>
            <person name="Saunders D."/>
            <person name="Seeger K."/>
            <person name="Sharp S."/>
            <person name="Skelton J."/>
            <person name="Simmonds M.N."/>
            <person name="Squares R."/>
            <person name="Squares S."/>
            <person name="Stevens K."/>
            <person name="Taylor K."/>
            <person name="Taylor R.G."/>
            <person name="Tivey A."/>
            <person name="Walsh S.V."/>
            <person name="Warren T."/>
            <person name="Whitehead S."/>
            <person name="Woodward J.R."/>
            <person name="Volckaert G."/>
            <person name="Aert R."/>
            <person name="Robben J."/>
            <person name="Grymonprez B."/>
            <person name="Weltjens I."/>
            <person name="Vanstreels E."/>
            <person name="Rieger M."/>
            <person name="Schaefer M."/>
            <person name="Mueller-Auer S."/>
            <person name="Gabel C."/>
            <person name="Fuchs M."/>
            <person name="Duesterhoeft A."/>
            <person name="Fritzc C."/>
            <person name="Holzer E."/>
            <person name="Moestl D."/>
            <person name="Hilbert H."/>
            <person name="Borzym K."/>
            <person name="Langer I."/>
            <person name="Beck A."/>
            <person name="Lehrach H."/>
            <person name="Reinhardt R."/>
            <person name="Pohl T.M."/>
            <person name="Eger P."/>
            <person name="Zimmermann W."/>
            <person name="Wedler H."/>
            <person name="Wambutt R."/>
            <person name="Purnelle B."/>
            <person name="Goffeau A."/>
            <person name="Cadieu E."/>
            <person name="Dreano S."/>
            <person name="Gloux S."/>
            <person name="Lelaure V."/>
            <person name="Mottier S."/>
            <person name="Galibert F."/>
            <person name="Aves S.J."/>
            <person name="Xiang Z."/>
            <person name="Hunt C."/>
            <person name="Moore K."/>
            <person name="Hurst S.M."/>
            <person name="Lucas M."/>
            <person name="Rochet M."/>
            <person name="Gaillardin C."/>
            <person name="Tallada V.A."/>
            <person name="Garzon A."/>
            <person name="Thode G."/>
            <person name="Daga R.R."/>
            <person name="Cruzado L."/>
            <person name="Jimenez J."/>
            <person name="Sanchez M."/>
            <person name="del Rey F."/>
            <person name="Benito J."/>
            <person name="Dominguez A."/>
            <person name="Revuelta J.L."/>
            <person name="Moreno S."/>
            <person name="Armstrong J."/>
            <person name="Forsburg S.L."/>
            <person name="Cerutti L."/>
            <person name="Lowe T."/>
            <person name="McCombie W.R."/>
            <person name="Paulsen I."/>
            <person name="Potashkin J."/>
            <person name="Shpakovski G.V."/>
            <person name="Ussery D."/>
            <person name="Barrell B.G."/>
            <person name="Nurse P."/>
        </authorList>
    </citation>
    <scope>NUCLEOTIDE SEQUENCE [LARGE SCALE GENOMIC DNA]</scope>
    <source>
        <strain>972 / ATCC 24843</strain>
    </source>
</reference>
<feature type="chain" id="PRO_0000116614" description="Uncharacterized protein C12B10.15c">
    <location>
        <begin position="1"/>
        <end position="147"/>
    </location>
</feature>
<sequence>MDSVKPIVKLEQAGSSNLEKASLLPCHISYDGPAPVFEYFHDKIQISNNTHSKTTVCLRGRELNGEELDLPENYTGQVVLCDDGLENDETSEKEIPESTWCINSTFEKVMLWNRDNMRSSEKDQWKRGVLEWIQFASKVKFNCSLYN</sequence>
<organism>
    <name type="scientific">Schizosaccharomyces pombe (strain 972 / ATCC 24843)</name>
    <name type="common">Fission yeast</name>
    <dbReference type="NCBI Taxonomy" id="284812"/>
    <lineage>
        <taxon>Eukaryota</taxon>
        <taxon>Fungi</taxon>
        <taxon>Dikarya</taxon>
        <taxon>Ascomycota</taxon>
        <taxon>Taphrinomycotina</taxon>
        <taxon>Schizosaccharomycetes</taxon>
        <taxon>Schizosaccharomycetales</taxon>
        <taxon>Schizosaccharomycetaceae</taxon>
        <taxon>Schizosaccharomyces</taxon>
    </lineage>
</organism>
<gene>
    <name type="ORF">SPAC12B10.15c</name>
</gene>
<dbReference type="EMBL" id="CU329670">
    <property type="protein sequence ID" value="CAA94705.1"/>
    <property type="molecule type" value="Genomic_DNA"/>
</dbReference>
<dbReference type="PIR" id="T37582">
    <property type="entry name" value="T37582"/>
</dbReference>
<dbReference type="SMR" id="Q10448"/>
<dbReference type="BioGRID" id="279640">
    <property type="interactions" value="9"/>
</dbReference>
<dbReference type="FunCoup" id="Q10448">
    <property type="interactions" value="35"/>
</dbReference>
<dbReference type="STRING" id="284812.Q10448"/>
<dbReference type="PaxDb" id="4896-SPAC12B10.15c.1"/>
<dbReference type="EnsemblFungi" id="SPAC12B10.15c.1">
    <property type="protein sequence ID" value="SPAC12B10.15c.1:pep"/>
    <property type="gene ID" value="SPAC12B10.15c"/>
</dbReference>
<dbReference type="KEGG" id="spo:2543211"/>
<dbReference type="PomBase" id="SPAC12B10.15c"/>
<dbReference type="VEuPathDB" id="FungiDB:SPAC12B10.15c"/>
<dbReference type="eggNOG" id="ENOG502SBKV">
    <property type="taxonomic scope" value="Eukaryota"/>
</dbReference>
<dbReference type="HOGENOM" id="CLU_097632_3_0_1"/>
<dbReference type="InParanoid" id="Q10448"/>
<dbReference type="OMA" id="GFAESMH"/>
<dbReference type="PhylomeDB" id="Q10448"/>
<dbReference type="PRO" id="PR:Q10448"/>
<dbReference type="Proteomes" id="UP000002485">
    <property type="component" value="Chromosome I"/>
</dbReference>
<dbReference type="GO" id="GO:0005829">
    <property type="term" value="C:cytosol"/>
    <property type="evidence" value="ECO:0007005"/>
    <property type="project" value="PomBase"/>
</dbReference>
<dbReference type="GO" id="GO:0005634">
    <property type="term" value="C:nucleus"/>
    <property type="evidence" value="ECO:0007005"/>
    <property type="project" value="PomBase"/>
</dbReference>
<dbReference type="GO" id="GO:0032299">
    <property type="term" value="C:ribonuclease H2 complex"/>
    <property type="evidence" value="ECO:0000266"/>
    <property type="project" value="PomBase"/>
</dbReference>
<dbReference type="GO" id="GO:1903469">
    <property type="term" value="P:removal of RNA primer involved in mitotic DNA replication"/>
    <property type="evidence" value="ECO:0000305"/>
    <property type="project" value="PomBase"/>
</dbReference>
<dbReference type="CDD" id="cd09271">
    <property type="entry name" value="RNase_H2-C"/>
    <property type="match status" value="1"/>
</dbReference>
<dbReference type="Gene3D" id="2.40.128.680">
    <property type="match status" value="1"/>
</dbReference>
<dbReference type="InterPro" id="IPR013924">
    <property type="entry name" value="RNase_H2_suC"/>
</dbReference>
<dbReference type="PANTHER" id="PTHR47204">
    <property type="entry name" value="OS02G0168900 PROTEIN"/>
    <property type="match status" value="1"/>
</dbReference>
<dbReference type="PANTHER" id="PTHR47204:SF1">
    <property type="entry name" value="RIBONUCLEASE H2 SUBUNIT C"/>
    <property type="match status" value="1"/>
</dbReference>
<dbReference type="Pfam" id="PF08615">
    <property type="entry name" value="RNase_H2_suC"/>
    <property type="match status" value="1"/>
</dbReference>
<name>YDEF_SCHPO</name>
<proteinExistence type="predicted"/>